<comment type="sequence caution" evidence="2">
    <conflict type="erroneous initiation">
        <sequence resource="EMBL-CDS" id="BAG65187"/>
    </conflict>
    <text>Extended N-terminus.</text>
</comment>
<sequence>MELAKMSDMTKLHQAVAAGDYSLVKKILKKGLCDPNYKDVDWNDRTPLHWAAIKGQMEVIRLLIEYGARPCLVTSVGWTPAHFAAEAGHLNILKTLHALHAAIDAPDFFGDTPKRIAQIYGQKACVAFLEKAEPECQDHRCAAQQKGLPLDERDEDWDAKKRELELSLPSLNQNMNKKNKKSRGPTRPSNTKGRRV</sequence>
<protein>
    <recommendedName>
        <fullName>Ankyrin repeat domain-containing protein 66</fullName>
    </recommendedName>
</protein>
<dbReference type="EMBL" id="AL161618">
    <property type="status" value="NOT_ANNOTATED_CDS"/>
    <property type="molecule type" value="Genomic_DNA"/>
</dbReference>
<dbReference type="EMBL" id="AL451143">
    <property type="status" value="NOT_ANNOTATED_CDS"/>
    <property type="molecule type" value="Genomic_DNA"/>
</dbReference>
<dbReference type="EMBL" id="AK304342">
    <property type="protein sequence ID" value="BAG65187.1"/>
    <property type="status" value="ALT_INIT"/>
    <property type="molecule type" value="mRNA"/>
</dbReference>
<dbReference type="CCDS" id="CCDS59024.2"/>
<dbReference type="RefSeq" id="NP_001155907.3">
    <property type="nucleotide sequence ID" value="NM_001162435.3"/>
</dbReference>
<dbReference type="SMR" id="B4E2M5"/>
<dbReference type="IntAct" id="B4E2M5">
    <property type="interactions" value="1"/>
</dbReference>
<dbReference type="MINT" id="B4E2M5"/>
<dbReference type="STRING" id="9606.ENSP00000454770"/>
<dbReference type="GlyGen" id="B4E2M5">
    <property type="glycosylation" value="1 site"/>
</dbReference>
<dbReference type="iPTMnet" id="B4E2M5"/>
<dbReference type="PhosphoSitePlus" id="B4E2M5"/>
<dbReference type="BioMuta" id="ANKRD66"/>
<dbReference type="MassIVE" id="B4E2M5"/>
<dbReference type="PaxDb" id="9606-ENSP00000454770"/>
<dbReference type="PeptideAtlas" id="B4E2M5"/>
<dbReference type="Antibodypedia" id="76898">
    <property type="antibodies" value="1 antibodies from 1 providers"/>
</dbReference>
<dbReference type="DNASU" id="100287718"/>
<dbReference type="Ensembl" id="ENST00000565422.3">
    <property type="protein sequence ID" value="ENSP00000454770.2"/>
    <property type="gene ID" value="ENSG00000230062.7"/>
</dbReference>
<dbReference type="GeneID" id="100287718"/>
<dbReference type="KEGG" id="hsa:100287718"/>
<dbReference type="MANE-Select" id="ENST00000565422.3">
    <property type="protein sequence ID" value="ENSP00000454770.2"/>
    <property type="RefSeq nucleotide sequence ID" value="NM_001162435.3"/>
    <property type="RefSeq protein sequence ID" value="NP_001155907.3"/>
</dbReference>
<dbReference type="UCSC" id="uc011dwf.3">
    <property type="organism name" value="human"/>
</dbReference>
<dbReference type="AGR" id="HGNC:44669"/>
<dbReference type="CTD" id="100287718"/>
<dbReference type="GeneCards" id="ANKRD66"/>
<dbReference type="HGNC" id="HGNC:44669">
    <property type="gene designation" value="ANKRD66"/>
</dbReference>
<dbReference type="HPA" id="ENSG00000230062">
    <property type="expression patterns" value="Tissue enriched (fallopian)"/>
</dbReference>
<dbReference type="neXtProt" id="NX_B4E2M5"/>
<dbReference type="OpenTargets" id="ENSG00000230062"/>
<dbReference type="VEuPathDB" id="HostDB:ENSG00000230062"/>
<dbReference type="eggNOG" id="KOG0504">
    <property type="taxonomic scope" value="Eukaryota"/>
</dbReference>
<dbReference type="GeneTree" id="ENSGT00610000086772"/>
<dbReference type="HOGENOM" id="CLU_000134_22_0_1"/>
<dbReference type="InParanoid" id="B4E2M5"/>
<dbReference type="OrthoDB" id="194358at2759"/>
<dbReference type="PAN-GO" id="B4E2M5">
    <property type="GO annotations" value="0 GO annotations based on evolutionary models"/>
</dbReference>
<dbReference type="PhylomeDB" id="B4E2M5"/>
<dbReference type="PathwayCommons" id="B4E2M5"/>
<dbReference type="BioGRID-ORCS" id="100287718">
    <property type="hits" value="8 hits in 1137 CRISPR screens"/>
</dbReference>
<dbReference type="GenomeRNAi" id="100287718"/>
<dbReference type="Pharos" id="B4E2M5">
    <property type="development level" value="Tdark"/>
</dbReference>
<dbReference type="PRO" id="PR:B4E2M5"/>
<dbReference type="Proteomes" id="UP000005640">
    <property type="component" value="Chromosome 6"/>
</dbReference>
<dbReference type="RNAct" id="B4E2M5">
    <property type="molecule type" value="protein"/>
</dbReference>
<dbReference type="Bgee" id="ENSG00000230062">
    <property type="expression patterns" value="Expressed in right uterine tube and 28 other cell types or tissues"/>
</dbReference>
<dbReference type="ExpressionAtlas" id="B4E2M5">
    <property type="expression patterns" value="baseline and differential"/>
</dbReference>
<dbReference type="Gene3D" id="1.25.40.20">
    <property type="entry name" value="Ankyrin repeat-containing domain"/>
    <property type="match status" value="1"/>
</dbReference>
<dbReference type="InterPro" id="IPR050776">
    <property type="entry name" value="Ank_Repeat/CDKN_Inhibitor"/>
</dbReference>
<dbReference type="InterPro" id="IPR002110">
    <property type="entry name" value="Ankyrin_rpt"/>
</dbReference>
<dbReference type="InterPro" id="IPR036770">
    <property type="entry name" value="Ankyrin_rpt-contain_sf"/>
</dbReference>
<dbReference type="PANTHER" id="PTHR24201">
    <property type="entry name" value="ANK_REP_REGION DOMAIN-CONTAINING PROTEIN"/>
    <property type="match status" value="1"/>
</dbReference>
<dbReference type="PANTHER" id="PTHR24201:SF15">
    <property type="entry name" value="ANKYRIN REPEAT DOMAIN-CONTAINING PROTEIN 66"/>
    <property type="match status" value="1"/>
</dbReference>
<dbReference type="Pfam" id="PF12796">
    <property type="entry name" value="Ank_2"/>
    <property type="match status" value="1"/>
</dbReference>
<dbReference type="SMART" id="SM00248">
    <property type="entry name" value="ANK"/>
    <property type="match status" value="3"/>
</dbReference>
<dbReference type="SUPFAM" id="SSF48403">
    <property type="entry name" value="Ankyrin repeat"/>
    <property type="match status" value="1"/>
</dbReference>
<dbReference type="PROSITE" id="PS50297">
    <property type="entry name" value="ANK_REP_REGION"/>
    <property type="match status" value="1"/>
</dbReference>
<dbReference type="PROSITE" id="PS50088">
    <property type="entry name" value="ANK_REPEAT"/>
    <property type="match status" value="2"/>
</dbReference>
<keyword id="KW-0040">ANK repeat</keyword>
<keyword id="KW-1267">Proteomics identification</keyword>
<keyword id="KW-1185">Reference proteome</keyword>
<keyword id="KW-0677">Repeat</keyword>
<reference key="1">
    <citation type="journal article" date="2003" name="Nature">
        <title>The DNA sequence and analysis of human chromosome 6.</title>
        <authorList>
            <person name="Mungall A.J."/>
            <person name="Palmer S.A."/>
            <person name="Sims S.K."/>
            <person name="Edwards C.A."/>
            <person name="Ashurst J.L."/>
            <person name="Wilming L."/>
            <person name="Jones M.C."/>
            <person name="Horton R."/>
            <person name="Hunt S.E."/>
            <person name="Scott C.E."/>
            <person name="Gilbert J.G.R."/>
            <person name="Clamp M.E."/>
            <person name="Bethel G."/>
            <person name="Milne S."/>
            <person name="Ainscough R."/>
            <person name="Almeida J.P."/>
            <person name="Ambrose K.D."/>
            <person name="Andrews T.D."/>
            <person name="Ashwell R.I.S."/>
            <person name="Babbage A.K."/>
            <person name="Bagguley C.L."/>
            <person name="Bailey J."/>
            <person name="Banerjee R."/>
            <person name="Barker D.J."/>
            <person name="Barlow K.F."/>
            <person name="Bates K."/>
            <person name="Beare D.M."/>
            <person name="Beasley H."/>
            <person name="Beasley O."/>
            <person name="Bird C.P."/>
            <person name="Blakey S.E."/>
            <person name="Bray-Allen S."/>
            <person name="Brook J."/>
            <person name="Brown A.J."/>
            <person name="Brown J.Y."/>
            <person name="Burford D.C."/>
            <person name="Burrill W."/>
            <person name="Burton J."/>
            <person name="Carder C."/>
            <person name="Carter N.P."/>
            <person name="Chapman J.C."/>
            <person name="Clark S.Y."/>
            <person name="Clark G."/>
            <person name="Clee C.M."/>
            <person name="Clegg S."/>
            <person name="Cobley V."/>
            <person name="Collier R.E."/>
            <person name="Collins J.E."/>
            <person name="Colman L.K."/>
            <person name="Corby N.R."/>
            <person name="Coville G.J."/>
            <person name="Culley K.M."/>
            <person name="Dhami P."/>
            <person name="Davies J."/>
            <person name="Dunn M."/>
            <person name="Earthrowl M.E."/>
            <person name="Ellington A.E."/>
            <person name="Evans K.A."/>
            <person name="Faulkner L."/>
            <person name="Francis M.D."/>
            <person name="Frankish A."/>
            <person name="Frankland J."/>
            <person name="French L."/>
            <person name="Garner P."/>
            <person name="Garnett J."/>
            <person name="Ghori M.J."/>
            <person name="Gilby L.M."/>
            <person name="Gillson C.J."/>
            <person name="Glithero R.J."/>
            <person name="Grafham D.V."/>
            <person name="Grant M."/>
            <person name="Gribble S."/>
            <person name="Griffiths C."/>
            <person name="Griffiths M.N.D."/>
            <person name="Hall R."/>
            <person name="Halls K.S."/>
            <person name="Hammond S."/>
            <person name="Harley J.L."/>
            <person name="Hart E.A."/>
            <person name="Heath P.D."/>
            <person name="Heathcott R."/>
            <person name="Holmes S.J."/>
            <person name="Howden P.J."/>
            <person name="Howe K.L."/>
            <person name="Howell G.R."/>
            <person name="Huckle E."/>
            <person name="Humphray S.J."/>
            <person name="Humphries M.D."/>
            <person name="Hunt A.R."/>
            <person name="Johnson C.M."/>
            <person name="Joy A.A."/>
            <person name="Kay M."/>
            <person name="Keenan S.J."/>
            <person name="Kimberley A.M."/>
            <person name="King A."/>
            <person name="Laird G.K."/>
            <person name="Langford C."/>
            <person name="Lawlor S."/>
            <person name="Leongamornlert D.A."/>
            <person name="Leversha M."/>
            <person name="Lloyd C.R."/>
            <person name="Lloyd D.M."/>
            <person name="Loveland J.E."/>
            <person name="Lovell J."/>
            <person name="Martin S."/>
            <person name="Mashreghi-Mohammadi M."/>
            <person name="Maslen G.L."/>
            <person name="Matthews L."/>
            <person name="McCann O.T."/>
            <person name="McLaren S.J."/>
            <person name="McLay K."/>
            <person name="McMurray A."/>
            <person name="Moore M.J.F."/>
            <person name="Mullikin J.C."/>
            <person name="Niblett D."/>
            <person name="Nickerson T."/>
            <person name="Novik K.L."/>
            <person name="Oliver K."/>
            <person name="Overton-Larty E.K."/>
            <person name="Parker A."/>
            <person name="Patel R."/>
            <person name="Pearce A.V."/>
            <person name="Peck A.I."/>
            <person name="Phillimore B.J.C.T."/>
            <person name="Phillips S."/>
            <person name="Plumb R.W."/>
            <person name="Porter K.M."/>
            <person name="Ramsey Y."/>
            <person name="Ranby S.A."/>
            <person name="Rice C.M."/>
            <person name="Ross M.T."/>
            <person name="Searle S.M."/>
            <person name="Sehra H.K."/>
            <person name="Sheridan E."/>
            <person name="Skuce C.D."/>
            <person name="Smith S."/>
            <person name="Smith M."/>
            <person name="Spraggon L."/>
            <person name="Squares S.L."/>
            <person name="Steward C.A."/>
            <person name="Sycamore N."/>
            <person name="Tamlyn-Hall G."/>
            <person name="Tester J."/>
            <person name="Theaker A.J."/>
            <person name="Thomas D.W."/>
            <person name="Thorpe A."/>
            <person name="Tracey A."/>
            <person name="Tromans A."/>
            <person name="Tubby B."/>
            <person name="Wall M."/>
            <person name="Wallis J.M."/>
            <person name="West A.P."/>
            <person name="White S.S."/>
            <person name="Whitehead S.L."/>
            <person name="Whittaker H."/>
            <person name="Wild A."/>
            <person name="Willey D.J."/>
            <person name="Wilmer T.E."/>
            <person name="Wood J.M."/>
            <person name="Wray P.W."/>
            <person name="Wyatt J.C."/>
            <person name="Young L."/>
            <person name="Younger R.M."/>
            <person name="Bentley D.R."/>
            <person name="Coulson A."/>
            <person name="Durbin R.M."/>
            <person name="Hubbard T."/>
            <person name="Sulston J.E."/>
            <person name="Dunham I."/>
            <person name="Rogers J."/>
            <person name="Beck S."/>
        </authorList>
    </citation>
    <scope>NUCLEOTIDE SEQUENCE [LARGE SCALE GENOMIC DNA]</scope>
</reference>
<reference key="2">
    <citation type="journal article" date="2004" name="Nat. Genet.">
        <title>Complete sequencing and characterization of 21,243 full-length human cDNAs.</title>
        <authorList>
            <person name="Ota T."/>
            <person name="Suzuki Y."/>
            <person name="Nishikawa T."/>
            <person name="Otsuki T."/>
            <person name="Sugiyama T."/>
            <person name="Irie R."/>
            <person name="Wakamatsu A."/>
            <person name="Hayashi K."/>
            <person name="Sato H."/>
            <person name="Nagai K."/>
            <person name="Kimura K."/>
            <person name="Makita H."/>
            <person name="Sekine M."/>
            <person name="Obayashi M."/>
            <person name="Nishi T."/>
            <person name="Shibahara T."/>
            <person name="Tanaka T."/>
            <person name="Ishii S."/>
            <person name="Yamamoto J."/>
            <person name="Saito K."/>
            <person name="Kawai Y."/>
            <person name="Isono Y."/>
            <person name="Nakamura Y."/>
            <person name="Nagahari K."/>
            <person name="Murakami K."/>
            <person name="Yasuda T."/>
            <person name="Iwayanagi T."/>
            <person name="Wagatsuma M."/>
            <person name="Shiratori A."/>
            <person name="Sudo H."/>
            <person name="Hosoiri T."/>
            <person name="Kaku Y."/>
            <person name="Kodaira H."/>
            <person name="Kondo H."/>
            <person name="Sugawara M."/>
            <person name="Takahashi M."/>
            <person name="Kanda K."/>
            <person name="Yokoi T."/>
            <person name="Furuya T."/>
            <person name="Kikkawa E."/>
            <person name="Omura Y."/>
            <person name="Abe K."/>
            <person name="Kamihara K."/>
            <person name="Katsuta N."/>
            <person name="Sato K."/>
            <person name="Tanikawa M."/>
            <person name="Yamazaki M."/>
            <person name="Ninomiya K."/>
            <person name="Ishibashi T."/>
            <person name="Yamashita H."/>
            <person name="Murakawa K."/>
            <person name="Fujimori K."/>
            <person name="Tanai H."/>
            <person name="Kimata M."/>
            <person name="Watanabe M."/>
            <person name="Hiraoka S."/>
            <person name="Chiba Y."/>
            <person name="Ishida S."/>
            <person name="Ono Y."/>
            <person name="Takiguchi S."/>
            <person name="Watanabe S."/>
            <person name="Yosida M."/>
            <person name="Hotuta T."/>
            <person name="Kusano J."/>
            <person name="Kanehori K."/>
            <person name="Takahashi-Fujii A."/>
            <person name="Hara H."/>
            <person name="Tanase T.-O."/>
            <person name="Nomura Y."/>
            <person name="Togiya S."/>
            <person name="Komai F."/>
            <person name="Hara R."/>
            <person name="Takeuchi K."/>
            <person name="Arita M."/>
            <person name="Imose N."/>
            <person name="Musashino K."/>
            <person name="Yuuki H."/>
            <person name="Oshima A."/>
            <person name="Sasaki N."/>
            <person name="Aotsuka S."/>
            <person name="Yoshikawa Y."/>
            <person name="Matsunawa H."/>
            <person name="Ichihara T."/>
            <person name="Shiohata N."/>
            <person name="Sano S."/>
            <person name="Moriya S."/>
            <person name="Momiyama H."/>
            <person name="Satoh N."/>
            <person name="Takami S."/>
            <person name="Terashima Y."/>
            <person name="Suzuki O."/>
            <person name="Nakagawa S."/>
            <person name="Senoh A."/>
            <person name="Mizoguchi H."/>
            <person name="Goto Y."/>
            <person name="Shimizu F."/>
            <person name="Wakebe H."/>
            <person name="Hishigaki H."/>
            <person name="Watanabe T."/>
            <person name="Sugiyama A."/>
            <person name="Takemoto M."/>
            <person name="Kawakami B."/>
            <person name="Yamazaki M."/>
            <person name="Watanabe K."/>
            <person name="Kumagai A."/>
            <person name="Itakura S."/>
            <person name="Fukuzumi Y."/>
            <person name="Fujimori Y."/>
            <person name="Komiyama M."/>
            <person name="Tashiro H."/>
            <person name="Tanigami A."/>
            <person name="Fujiwara T."/>
            <person name="Ono T."/>
            <person name="Yamada K."/>
            <person name="Fujii Y."/>
            <person name="Ozaki K."/>
            <person name="Hirao M."/>
            <person name="Ohmori Y."/>
            <person name="Kawabata A."/>
            <person name="Hikiji T."/>
            <person name="Kobatake N."/>
            <person name="Inagaki H."/>
            <person name="Ikema Y."/>
            <person name="Okamoto S."/>
            <person name="Okitani R."/>
            <person name="Kawakami T."/>
            <person name="Noguchi S."/>
            <person name="Itoh T."/>
            <person name="Shigeta K."/>
            <person name="Senba T."/>
            <person name="Matsumura K."/>
            <person name="Nakajima Y."/>
            <person name="Mizuno T."/>
            <person name="Morinaga M."/>
            <person name="Sasaki M."/>
            <person name="Togashi T."/>
            <person name="Oyama M."/>
            <person name="Hata H."/>
            <person name="Watanabe M."/>
            <person name="Komatsu T."/>
            <person name="Mizushima-Sugano J."/>
            <person name="Satoh T."/>
            <person name="Shirai Y."/>
            <person name="Takahashi Y."/>
            <person name="Nakagawa K."/>
            <person name="Okumura K."/>
            <person name="Nagase T."/>
            <person name="Nomura N."/>
            <person name="Kikuchi H."/>
            <person name="Masuho Y."/>
            <person name="Yamashita R."/>
            <person name="Nakai K."/>
            <person name="Yada T."/>
            <person name="Nakamura Y."/>
            <person name="Ohara O."/>
            <person name="Isogai T."/>
            <person name="Sugano S."/>
        </authorList>
    </citation>
    <scope>NUCLEOTIDE SEQUENCE [LARGE SCALE MRNA]</scope>
    <source>
        <tissue>Trachea</tissue>
    </source>
</reference>
<evidence type="ECO:0000256" key="1">
    <source>
        <dbReference type="SAM" id="MobiDB-lite"/>
    </source>
</evidence>
<evidence type="ECO:0000305" key="2"/>
<gene>
    <name type="primary">ANKRD66</name>
</gene>
<organism>
    <name type="scientific">Homo sapiens</name>
    <name type="common">Human</name>
    <dbReference type="NCBI Taxonomy" id="9606"/>
    <lineage>
        <taxon>Eukaryota</taxon>
        <taxon>Metazoa</taxon>
        <taxon>Chordata</taxon>
        <taxon>Craniata</taxon>
        <taxon>Vertebrata</taxon>
        <taxon>Euteleostomi</taxon>
        <taxon>Mammalia</taxon>
        <taxon>Eutheria</taxon>
        <taxon>Euarchontoglires</taxon>
        <taxon>Primates</taxon>
        <taxon>Haplorrhini</taxon>
        <taxon>Catarrhini</taxon>
        <taxon>Hominidae</taxon>
        <taxon>Homo</taxon>
    </lineage>
</organism>
<feature type="chain" id="PRO_0000421258" description="Ankyrin repeat domain-containing protein 66">
    <location>
        <begin position="1"/>
        <end position="196"/>
    </location>
</feature>
<feature type="repeat" description="ANK 1">
    <location>
        <begin position="7"/>
        <end position="37"/>
    </location>
</feature>
<feature type="repeat" description="ANK 2">
    <location>
        <begin position="43"/>
        <end position="72"/>
    </location>
</feature>
<feature type="repeat" description="ANK 3">
    <location>
        <begin position="76"/>
        <end position="105"/>
    </location>
</feature>
<feature type="region of interest" description="Disordered" evidence="1">
    <location>
        <begin position="152"/>
        <end position="196"/>
    </location>
</feature>
<feature type="compositionally biased region" description="Polar residues" evidence="1">
    <location>
        <begin position="187"/>
        <end position="196"/>
    </location>
</feature>
<accession>B4E2M5</accession>
<proteinExistence type="evidence at protein level"/>
<name>ANR66_HUMAN</name>